<name>CH60_STAA8</name>
<gene>
    <name evidence="1" type="primary">groEL</name>
    <name evidence="1" type="synonym">groL</name>
    <name type="ordered locus">SAOUHSC_02254</name>
</gene>
<feature type="chain" id="PRO_0000256992" description="Chaperonin GroEL">
    <location>
        <begin position="1"/>
        <end position="538"/>
    </location>
</feature>
<feature type="binding site" evidence="1">
    <location>
        <begin position="29"/>
        <end position="32"/>
    </location>
    <ligand>
        <name>ATP</name>
        <dbReference type="ChEBI" id="CHEBI:30616"/>
    </ligand>
</feature>
<feature type="binding site" evidence="1">
    <location>
        <begin position="86"/>
        <end position="90"/>
    </location>
    <ligand>
        <name>ATP</name>
        <dbReference type="ChEBI" id="CHEBI:30616"/>
    </ligand>
</feature>
<feature type="binding site" evidence="1">
    <location>
        <position position="413"/>
    </location>
    <ligand>
        <name>ATP</name>
        <dbReference type="ChEBI" id="CHEBI:30616"/>
    </ligand>
</feature>
<feature type="binding site" evidence="1">
    <location>
        <begin position="476"/>
        <end position="478"/>
    </location>
    <ligand>
        <name>ATP</name>
        <dbReference type="ChEBI" id="CHEBI:30616"/>
    </ligand>
</feature>
<feature type="binding site" evidence="1">
    <location>
        <position position="492"/>
    </location>
    <ligand>
        <name>ATP</name>
        <dbReference type="ChEBI" id="CHEBI:30616"/>
    </ligand>
</feature>
<protein>
    <recommendedName>
        <fullName evidence="1">Chaperonin GroEL</fullName>
        <ecNumber evidence="1">5.6.1.7</ecNumber>
    </recommendedName>
    <alternativeName>
        <fullName evidence="1">60 kDa chaperonin</fullName>
    </alternativeName>
    <alternativeName>
        <fullName evidence="1">Chaperonin-60</fullName>
        <shortName evidence="1">Cpn60</shortName>
    </alternativeName>
</protein>
<sequence>MVKQLKFSEDARQAMLRGVDQLANAVKVTIGPKGRNVVLDKEFTAPLITNDGVTIAKEIELEDPYENMGAKLVQEVANKTNEIAGDGTTTATVLAQAMIQEGLKNVTSGANPVGLRQGIDKAVKVAVEALHENSQKVENKNEIAQVGAISAADEEIGRYISEAMEKVGNDGVITIEESNGLNTELEVVEGMQFDRGYQSPYMVTDSDKMVAELERPYFLVTDKKISSFQDILPLLEQVVQSNRPILIVADEVEGDALTNIVLNRMRGTFTAVAVKAPGFGDRRKAMLEDLAILTGAQVITDDLGLDLKDASIDMLGTASKVEVTKDNTTVVDGDGDENSIDARVSQLKSQIEETESDFDREKLQERLAKLAGGVAVIKVGAASETELKERKLRIEDALNSTRAAVEEGIVAGGGTALVNVYQKVSEIEAEGDIETGVNIVLKALTAPVRQIAENAGLEGSVIVERLKNAEPGVGFNAATNEWVNMLEEGIVDPTKVTRSALQHAASVAAMFLTTEAVVASIPEKNNDQPNMGGMPGMM</sequence>
<proteinExistence type="inferred from homology"/>
<comment type="function">
    <text evidence="1">Together with its co-chaperonin GroES, plays an essential role in assisting protein folding. The GroEL-GroES system forms a nano-cage that allows encapsulation of the non-native substrate proteins and provides a physical environment optimized to promote and accelerate protein folding.</text>
</comment>
<comment type="catalytic activity">
    <reaction evidence="1">
        <text>ATP + H2O + a folded polypeptide = ADP + phosphate + an unfolded polypeptide.</text>
        <dbReference type="EC" id="5.6.1.7"/>
    </reaction>
</comment>
<comment type="subunit">
    <text evidence="1">Forms a cylinder of 14 subunits composed of two heptameric rings stacked back-to-back. Interacts with the co-chaperonin GroES.</text>
</comment>
<comment type="subcellular location">
    <subcellularLocation>
        <location evidence="1">Cytoplasm</location>
    </subcellularLocation>
</comment>
<comment type="similarity">
    <text evidence="1">Belongs to the chaperonin (HSP60) family.</text>
</comment>
<keyword id="KW-0067">ATP-binding</keyword>
<keyword id="KW-0143">Chaperone</keyword>
<keyword id="KW-0963">Cytoplasm</keyword>
<keyword id="KW-0413">Isomerase</keyword>
<keyword id="KW-0547">Nucleotide-binding</keyword>
<keyword id="KW-1185">Reference proteome</keyword>
<reference key="1">
    <citation type="book" date="2006" name="Gram positive pathogens, 2nd edition">
        <title>The Staphylococcus aureus NCTC 8325 genome.</title>
        <editorList>
            <person name="Fischetti V."/>
            <person name="Novick R."/>
            <person name="Ferretti J."/>
            <person name="Portnoy D."/>
            <person name="Rood J."/>
        </editorList>
        <authorList>
            <person name="Gillaspy A.F."/>
            <person name="Worrell V."/>
            <person name="Orvis J."/>
            <person name="Roe B.A."/>
            <person name="Dyer D.W."/>
            <person name="Iandolo J.J."/>
        </authorList>
    </citation>
    <scope>NUCLEOTIDE SEQUENCE [LARGE SCALE GENOMIC DNA]</scope>
    <source>
        <strain>NCTC 8325 / PS 47</strain>
    </source>
</reference>
<organism>
    <name type="scientific">Staphylococcus aureus (strain NCTC 8325 / PS 47)</name>
    <dbReference type="NCBI Taxonomy" id="93061"/>
    <lineage>
        <taxon>Bacteria</taxon>
        <taxon>Bacillati</taxon>
        <taxon>Bacillota</taxon>
        <taxon>Bacilli</taxon>
        <taxon>Bacillales</taxon>
        <taxon>Staphylococcaceae</taxon>
        <taxon>Staphylococcus</taxon>
    </lineage>
</organism>
<evidence type="ECO:0000255" key="1">
    <source>
        <dbReference type="HAMAP-Rule" id="MF_00600"/>
    </source>
</evidence>
<dbReference type="EC" id="5.6.1.7" evidence="1"/>
<dbReference type="EMBL" id="CP000253">
    <property type="protein sequence ID" value="ABD31293.1"/>
    <property type="molecule type" value="Genomic_DNA"/>
</dbReference>
<dbReference type="RefSeq" id="WP_000240635.1">
    <property type="nucleotide sequence ID" value="NC_007795.1"/>
</dbReference>
<dbReference type="RefSeq" id="YP_500736.1">
    <property type="nucleotide sequence ID" value="NC_007795.1"/>
</dbReference>
<dbReference type="SMR" id="Q2FWN4"/>
<dbReference type="STRING" id="93061.SAOUHSC_02254"/>
<dbReference type="PaxDb" id="1280-SAXN108_2121"/>
<dbReference type="GeneID" id="3919674"/>
<dbReference type="KEGG" id="sao:SAOUHSC_02254"/>
<dbReference type="PATRIC" id="fig|93061.5.peg.2047"/>
<dbReference type="eggNOG" id="COG0459">
    <property type="taxonomic scope" value="Bacteria"/>
</dbReference>
<dbReference type="HOGENOM" id="CLU_016503_3_0_9"/>
<dbReference type="OrthoDB" id="9766614at2"/>
<dbReference type="Proteomes" id="UP000008816">
    <property type="component" value="Chromosome"/>
</dbReference>
<dbReference type="GO" id="GO:1990220">
    <property type="term" value="C:GroEL-GroES complex"/>
    <property type="evidence" value="ECO:0000318"/>
    <property type="project" value="GO_Central"/>
</dbReference>
<dbReference type="GO" id="GO:0005524">
    <property type="term" value="F:ATP binding"/>
    <property type="evidence" value="ECO:0000318"/>
    <property type="project" value="GO_Central"/>
</dbReference>
<dbReference type="GO" id="GO:0140662">
    <property type="term" value="F:ATP-dependent protein folding chaperone"/>
    <property type="evidence" value="ECO:0007669"/>
    <property type="project" value="InterPro"/>
</dbReference>
<dbReference type="GO" id="GO:0016853">
    <property type="term" value="F:isomerase activity"/>
    <property type="evidence" value="ECO:0007669"/>
    <property type="project" value="UniProtKB-KW"/>
</dbReference>
<dbReference type="GO" id="GO:0051082">
    <property type="term" value="F:unfolded protein binding"/>
    <property type="evidence" value="ECO:0000318"/>
    <property type="project" value="GO_Central"/>
</dbReference>
<dbReference type="GO" id="GO:0051085">
    <property type="term" value="P:chaperone cofactor-dependent protein refolding"/>
    <property type="evidence" value="ECO:0000318"/>
    <property type="project" value="GO_Central"/>
</dbReference>
<dbReference type="GO" id="GO:0042026">
    <property type="term" value="P:protein refolding"/>
    <property type="evidence" value="ECO:0007669"/>
    <property type="project" value="UniProtKB-UniRule"/>
</dbReference>
<dbReference type="GO" id="GO:0009408">
    <property type="term" value="P:response to heat"/>
    <property type="evidence" value="ECO:0000318"/>
    <property type="project" value="GO_Central"/>
</dbReference>
<dbReference type="CDD" id="cd03344">
    <property type="entry name" value="GroEL"/>
    <property type="match status" value="1"/>
</dbReference>
<dbReference type="FunFam" id="1.10.560.10:FF:000001">
    <property type="entry name" value="60 kDa chaperonin"/>
    <property type="match status" value="1"/>
</dbReference>
<dbReference type="FunFam" id="3.50.7.10:FF:000001">
    <property type="entry name" value="60 kDa chaperonin"/>
    <property type="match status" value="1"/>
</dbReference>
<dbReference type="Gene3D" id="3.50.7.10">
    <property type="entry name" value="GroEL"/>
    <property type="match status" value="1"/>
</dbReference>
<dbReference type="Gene3D" id="1.10.560.10">
    <property type="entry name" value="GroEL-like equatorial domain"/>
    <property type="match status" value="1"/>
</dbReference>
<dbReference type="Gene3D" id="3.30.260.10">
    <property type="entry name" value="TCP-1-like chaperonin intermediate domain"/>
    <property type="match status" value="1"/>
</dbReference>
<dbReference type="HAMAP" id="MF_00600">
    <property type="entry name" value="CH60"/>
    <property type="match status" value="1"/>
</dbReference>
<dbReference type="InterPro" id="IPR018370">
    <property type="entry name" value="Chaperonin_Cpn60_CS"/>
</dbReference>
<dbReference type="InterPro" id="IPR001844">
    <property type="entry name" value="Cpn60/GroEL"/>
</dbReference>
<dbReference type="InterPro" id="IPR002423">
    <property type="entry name" value="Cpn60/GroEL/TCP-1"/>
</dbReference>
<dbReference type="InterPro" id="IPR027409">
    <property type="entry name" value="GroEL-like_apical_dom_sf"/>
</dbReference>
<dbReference type="InterPro" id="IPR027413">
    <property type="entry name" value="GROEL-like_equatorial_sf"/>
</dbReference>
<dbReference type="InterPro" id="IPR027410">
    <property type="entry name" value="TCP-1-like_intermed_sf"/>
</dbReference>
<dbReference type="NCBIfam" id="TIGR02348">
    <property type="entry name" value="GroEL"/>
    <property type="match status" value="1"/>
</dbReference>
<dbReference type="NCBIfam" id="NF000592">
    <property type="entry name" value="PRK00013.1"/>
    <property type="match status" value="1"/>
</dbReference>
<dbReference type="NCBIfam" id="NF009487">
    <property type="entry name" value="PRK12849.1"/>
    <property type="match status" value="1"/>
</dbReference>
<dbReference type="NCBIfam" id="NF009488">
    <property type="entry name" value="PRK12850.1"/>
    <property type="match status" value="1"/>
</dbReference>
<dbReference type="NCBIfam" id="NF009489">
    <property type="entry name" value="PRK12851.1"/>
    <property type="match status" value="1"/>
</dbReference>
<dbReference type="PANTHER" id="PTHR45633">
    <property type="entry name" value="60 KDA HEAT SHOCK PROTEIN, MITOCHONDRIAL"/>
    <property type="match status" value="1"/>
</dbReference>
<dbReference type="Pfam" id="PF00118">
    <property type="entry name" value="Cpn60_TCP1"/>
    <property type="match status" value="1"/>
</dbReference>
<dbReference type="PRINTS" id="PR00298">
    <property type="entry name" value="CHAPERONIN60"/>
</dbReference>
<dbReference type="SUPFAM" id="SSF52029">
    <property type="entry name" value="GroEL apical domain-like"/>
    <property type="match status" value="1"/>
</dbReference>
<dbReference type="SUPFAM" id="SSF48592">
    <property type="entry name" value="GroEL equatorial domain-like"/>
    <property type="match status" value="1"/>
</dbReference>
<dbReference type="SUPFAM" id="SSF54849">
    <property type="entry name" value="GroEL-intermediate domain like"/>
    <property type="match status" value="1"/>
</dbReference>
<dbReference type="PROSITE" id="PS00296">
    <property type="entry name" value="CHAPERONINS_CPN60"/>
    <property type="match status" value="1"/>
</dbReference>
<accession>Q2FWN4</accession>